<accession>P9WFQ5</accession>
<accession>L0TDR4</accession>
<accession>O05808</accession>
<accession>P67104</accession>
<protein>
    <recommendedName>
        <fullName>UPF0039 protein Rv2851c</fullName>
    </recommendedName>
</protein>
<keyword id="KW-1185">Reference proteome</keyword>
<dbReference type="EMBL" id="AL123456">
    <property type="protein sequence ID" value="CCP45652.1"/>
    <property type="molecule type" value="Genomic_DNA"/>
</dbReference>
<dbReference type="PIR" id="F70589">
    <property type="entry name" value="F70589"/>
</dbReference>
<dbReference type="RefSeq" id="NP_217367.1">
    <property type="nucleotide sequence ID" value="NC_000962.3"/>
</dbReference>
<dbReference type="RefSeq" id="WP_003414543.1">
    <property type="nucleotide sequence ID" value="NZ_NVQJ01000006.1"/>
</dbReference>
<dbReference type="SMR" id="P9WFQ5"/>
<dbReference type="FunCoup" id="P9WFQ5">
    <property type="interactions" value="6"/>
</dbReference>
<dbReference type="STRING" id="83332.Rv2851c"/>
<dbReference type="PaxDb" id="83332-Rv2851c"/>
<dbReference type="GeneID" id="887664"/>
<dbReference type="KEGG" id="mtu:Rv2851c"/>
<dbReference type="KEGG" id="mtv:RVBD_2851c"/>
<dbReference type="TubercuList" id="Rv2851c"/>
<dbReference type="eggNOG" id="COG2153">
    <property type="taxonomic scope" value="Bacteria"/>
</dbReference>
<dbReference type="InParanoid" id="P9WFQ5"/>
<dbReference type="OrthoDB" id="9796171at2"/>
<dbReference type="PhylomeDB" id="P9WFQ5"/>
<dbReference type="Proteomes" id="UP000001584">
    <property type="component" value="Chromosome"/>
</dbReference>
<dbReference type="GO" id="GO:0008999">
    <property type="term" value="F:protein-N-terminal-alanine acetyltransferase activity"/>
    <property type="evidence" value="ECO:0000318"/>
    <property type="project" value="GO_Central"/>
</dbReference>
<dbReference type="Gene3D" id="3.40.630.30">
    <property type="match status" value="1"/>
</dbReference>
<dbReference type="InterPro" id="IPR016181">
    <property type="entry name" value="Acyl_CoA_acyltransferase"/>
</dbReference>
<dbReference type="InterPro" id="IPR000182">
    <property type="entry name" value="GNAT_dom"/>
</dbReference>
<dbReference type="Pfam" id="PF13673">
    <property type="entry name" value="Acetyltransf_10"/>
    <property type="match status" value="1"/>
</dbReference>
<dbReference type="SUPFAM" id="SSF55729">
    <property type="entry name" value="Acyl-CoA N-acyltransferases (Nat)"/>
    <property type="match status" value="1"/>
</dbReference>
<dbReference type="PROSITE" id="PS51186">
    <property type="entry name" value="GNAT"/>
    <property type="match status" value="1"/>
</dbReference>
<proteinExistence type="evidence at protein level"/>
<feature type="chain" id="PRO_0000201921" description="UPF0039 protein Rv2851c">
    <location>
        <begin position="1"/>
        <end position="156"/>
    </location>
</feature>
<feature type="domain" description="N-acetyltransferase" evidence="1">
    <location>
        <begin position="8"/>
        <end position="150"/>
    </location>
</feature>
<reference key="1">
    <citation type="journal article" date="1998" name="Nature">
        <title>Deciphering the biology of Mycobacterium tuberculosis from the complete genome sequence.</title>
        <authorList>
            <person name="Cole S.T."/>
            <person name="Brosch R."/>
            <person name="Parkhill J."/>
            <person name="Garnier T."/>
            <person name="Churcher C.M."/>
            <person name="Harris D.E."/>
            <person name="Gordon S.V."/>
            <person name="Eiglmeier K."/>
            <person name="Gas S."/>
            <person name="Barry C.E. III"/>
            <person name="Tekaia F."/>
            <person name="Badcock K."/>
            <person name="Basham D."/>
            <person name="Brown D."/>
            <person name="Chillingworth T."/>
            <person name="Connor R."/>
            <person name="Davies R.M."/>
            <person name="Devlin K."/>
            <person name="Feltwell T."/>
            <person name="Gentles S."/>
            <person name="Hamlin N."/>
            <person name="Holroyd S."/>
            <person name="Hornsby T."/>
            <person name="Jagels K."/>
            <person name="Krogh A."/>
            <person name="McLean J."/>
            <person name="Moule S."/>
            <person name="Murphy L.D."/>
            <person name="Oliver S."/>
            <person name="Osborne J."/>
            <person name="Quail M.A."/>
            <person name="Rajandream M.A."/>
            <person name="Rogers J."/>
            <person name="Rutter S."/>
            <person name="Seeger K."/>
            <person name="Skelton S."/>
            <person name="Squares S."/>
            <person name="Squares R."/>
            <person name="Sulston J.E."/>
            <person name="Taylor K."/>
            <person name="Whitehead S."/>
            <person name="Barrell B.G."/>
        </authorList>
    </citation>
    <scope>NUCLEOTIDE SEQUENCE [LARGE SCALE GENOMIC DNA]</scope>
    <source>
        <strain>ATCC 25618 / H37Rv</strain>
    </source>
</reference>
<reference key="2">
    <citation type="journal article" date="2011" name="Mol. Cell. Proteomics">
        <title>Proteogenomic analysis of Mycobacterium tuberculosis by high resolution mass spectrometry.</title>
        <authorList>
            <person name="Kelkar D.S."/>
            <person name="Kumar D."/>
            <person name="Kumar P."/>
            <person name="Balakrishnan L."/>
            <person name="Muthusamy B."/>
            <person name="Yadav A.K."/>
            <person name="Shrivastava P."/>
            <person name="Marimuthu A."/>
            <person name="Anand S."/>
            <person name="Sundaram H."/>
            <person name="Kingsbury R."/>
            <person name="Harsha H.C."/>
            <person name="Nair B."/>
            <person name="Prasad T.S."/>
            <person name="Chauhan D.S."/>
            <person name="Katoch K."/>
            <person name="Katoch V.M."/>
            <person name="Kumar P."/>
            <person name="Chaerkady R."/>
            <person name="Ramachandran S."/>
            <person name="Dash D."/>
            <person name="Pandey A."/>
        </authorList>
    </citation>
    <scope>IDENTIFICATION BY MASS SPECTROMETRY [LARGE SCALE ANALYSIS]</scope>
    <source>
        <strain>ATCC 25618 / H37Rv</strain>
    </source>
</reference>
<organism>
    <name type="scientific">Mycobacterium tuberculosis (strain ATCC 25618 / H37Rv)</name>
    <dbReference type="NCBI Taxonomy" id="83332"/>
    <lineage>
        <taxon>Bacteria</taxon>
        <taxon>Bacillati</taxon>
        <taxon>Actinomycetota</taxon>
        <taxon>Actinomycetes</taxon>
        <taxon>Mycobacteriales</taxon>
        <taxon>Mycobacteriaceae</taxon>
        <taxon>Mycobacterium</taxon>
        <taxon>Mycobacterium tuberculosis complex</taxon>
    </lineage>
</organism>
<name>Y2851_MYCTU</name>
<comment type="similarity">
    <text evidence="2">Belongs to the UPF0039 (ElaA) family.</text>
</comment>
<evidence type="ECO:0000255" key="1">
    <source>
        <dbReference type="PROSITE-ProRule" id="PRU00532"/>
    </source>
</evidence>
<evidence type="ECO:0000305" key="2"/>
<sequence length="156" mass="17670">MTEALRRVWAKDLDARALYELLKLRVEVFVVEQACPYPELDGRDLLAETRHFWLETPDGEVTCTLRLMEEHAGGEKVFRIGRLCTKRDARGQGHSNRLLCAALAEVGDYPCRIDAQAYLTAMYAQHGFVRDGDEFLDDGIPHVPMLRPGSGQVERP</sequence>
<gene>
    <name type="ordered locus">Rv2851c</name>
    <name type="ORF">MTCY24A1.06</name>
</gene>